<proteinExistence type="evidence at protein level"/>
<name>ORCK_FAXLI</name>
<sequence length="13" mass="1518">NFDEIDRSGFGFN</sequence>
<accession>P37086</accession>
<feature type="peptide" id="PRO_0000044181" description="Orcokinin">
    <location>
        <begin position="1"/>
        <end position="13"/>
    </location>
</feature>
<keyword id="KW-0903">Direct protein sequencing</keyword>
<keyword id="KW-0527">Neuropeptide</keyword>
<keyword id="KW-0964">Secreted</keyword>
<protein>
    <recommendedName>
        <fullName>Orcokinin</fullName>
    </recommendedName>
</protein>
<organism>
    <name type="scientific">Faxonius limosus</name>
    <name type="common">Spinycheek crayfish</name>
    <name type="synonym">Orconectes limosus</name>
    <dbReference type="NCBI Taxonomy" id="28379"/>
    <lineage>
        <taxon>Eukaryota</taxon>
        <taxon>Metazoa</taxon>
        <taxon>Ecdysozoa</taxon>
        <taxon>Arthropoda</taxon>
        <taxon>Crustacea</taxon>
        <taxon>Multicrustacea</taxon>
        <taxon>Malacostraca</taxon>
        <taxon>Eumalacostraca</taxon>
        <taxon>Eucarida</taxon>
        <taxon>Decapoda</taxon>
        <taxon>Pleocyemata</taxon>
        <taxon>Astacidea</taxon>
        <taxon>Astacoidea</taxon>
        <taxon>Cambaridae</taxon>
        <taxon>Faxonius</taxon>
    </lineage>
</organism>
<dbReference type="GO" id="GO:0005576">
    <property type="term" value="C:extracellular region"/>
    <property type="evidence" value="ECO:0007669"/>
    <property type="project" value="UniProtKB-SubCell"/>
</dbReference>
<dbReference type="GO" id="GO:0007218">
    <property type="term" value="P:neuropeptide signaling pathway"/>
    <property type="evidence" value="ECO:0007669"/>
    <property type="project" value="UniProtKB-KW"/>
</dbReference>
<comment type="function">
    <text>Myotropic peptide, enhances both the frequency and amplitude of spontaneous hindgut contractions.</text>
</comment>
<comment type="subcellular location">
    <subcellularLocation>
        <location>Secreted</location>
    </subcellularLocation>
</comment>
<comment type="tissue specificity">
    <text>Abdominal nerve cord and hindgut.</text>
</comment>
<reference key="1">
    <citation type="journal article" date="1992" name="Peptides">
        <title>Orcokinin: a novel myotropic peptide from the nervous system of the crayfish, Orconectes limosus.</title>
        <authorList>
            <person name="Stangier J."/>
            <person name="Hilbich C."/>
            <person name="Burdzik S."/>
            <person name="Keller R."/>
        </authorList>
    </citation>
    <scope>PROTEIN SEQUENCE</scope>
    <source>
        <tissue>Abdominal nerve cord</tissue>
    </source>
</reference>